<dbReference type="EC" id="1.6.5.5"/>
<dbReference type="EMBL" id="CR861167">
    <property type="protein sequence ID" value="CAH93239.1"/>
    <property type="molecule type" value="mRNA"/>
</dbReference>
<dbReference type="RefSeq" id="NP_001126904.1">
    <property type="nucleotide sequence ID" value="NM_001133432.1"/>
</dbReference>
<dbReference type="SMR" id="Q5R4S7"/>
<dbReference type="FunCoup" id="Q5R4S7">
    <property type="interactions" value="1122"/>
</dbReference>
<dbReference type="STRING" id="9601.ENSPPYP00000001437"/>
<dbReference type="GeneID" id="100173920"/>
<dbReference type="KEGG" id="pon:100173920"/>
<dbReference type="CTD" id="1429"/>
<dbReference type="eggNOG" id="KOG1198">
    <property type="taxonomic scope" value="Eukaryota"/>
</dbReference>
<dbReference type="InParanoid" id="Q5R4S7"/>
<dbReference type="OrthoDB" id="3941538at2759"/>
<dbReference type="Proteomes" id="UP000001595">
    <property type="component" value="Unplaced"/>
</dbReference>
<dbReference type="GO" id="GO:0005829">
    <property type="term" value="C:cytosol"/>
    <property type="evidence" value="ECO:0000250"/>
    <property type="project" value="UniProtKB"/>
</dbReference>
<dbReference type="GO" id="GO:0003730">
    <property type="term" value="F:mRNA 3'-UTR binding"/>
    <property type="evidence" value="ECO:0000250"/>
    <property type="project" value="UniProtKB"/>
</dbReference>
<dbReference type="GO" id="GO:0070402">
    <property type="term" value="F:NADPH binding"/>
    <property type="evidence" value="ECO:0000250"/>
    <property type="project" value="UniProtKB"/>
</dbReference>
<dbReference type="GO" id="GO:0003960">
    <property type="term" value="F:NADPH:quinone reductase activity"/>
    <property type="evidence" value="ECO:0000250"/>
    <property type="project" value="UniProtKB"/>
</dbReference>
<dbReference type="GO" id="GO:0008270">
    <property type="term" value="F:zinc ion binding"/>
    <property type="evidence" value="ECO:0007669"/>
    <property type="project" value="InterPro"/>
</dbReference>
<dbReference type="GO" id="GO:0042178">
    <property type="term" value="P:xenobiotic catabolic process"/>
    <property type="evidence" value="ECO:0000250"/>
    <property type="project" value="UniProtKB"/>
</dbReference>
<dbReference type="CDD" id="cd08253">
    <property type="entry name" value="zeta_crystallin"/>
    <property type="match status" value="1"/>
</dbReference>
<dbReference type="FunFam" id="3.90.180.10:FF:000072">
    <property type="entry name" value="Crystallin zeta"/>
    <property type="match status" value="1"/>
</dbReference>
<dbReference type="FunFam" id="3.90.180.10:FF:000016">
    <property type="entry name" value="Quinone oxidoreductase"/>
    <property type="match status" value="1"/>
</dbReference>
<dbReference type="FunFam" id="3.40.50.720:FF:000244">
    <property type="entry name" value="quinone oxidoreductase"/>
    <property type="match status" value="1"/>
</dbReference>
<dbReference type="Gene3D" id="3.90.180.10">
    <property type="entry name" value="Medium-chain alcohol dehydrogenases, catalytic domain"/>
    <property type="match status" value="1"/>
</dbReference>
<dbReference type="Gene3D" id="3.40.50.720">
    <property type="entry name" value="NAD(P)-binding Rossmann-like Domain"/>
    <property type="match status" value="1"/>
</dbReference>
<dbReference type="InterPro" id="IPR013149">
    <property type="entry name" value="ADH-like_C"/>
</dbReference>
<dbReference type="InterPro" id="IPR013154">
    <property type="entry name" value="ADH-like_N"/>
</dbReference>
<dbReference type="InterPro" id="IPR011032">
    <property type="entry name" value="GroES-like_sf"/>
</dbReference>
<dbReference type="InterPro" id="IPR036291">
    <property type="entry name" value="NAD(P)-bd_dom_sf"/>
</dbReference>
<dbReference type="InterPro" id="IPR020843">
    <property type="entry name" value="PKS_ER"/>
</dbReference>
<dbReference type="InterPro" id="IPR002364">
    <property type="entry name" value="Quin_OxRdtase/zeta-crystal_CS"/>
</dbReference>
<dbReference type="InterPro" id="IPR051603">
    <property type="entry name" value="Zinc-ADH_QOR/CCCR"/>
</dbReference>
<dbReference type="PANTHER" id="PTHR44154">
    <property type="entry name" value="QUINONE OXIDOREDUCTASE"/>
    <property type="match status" value="1"/>
</dbReference>
<dbReference type="PANTHER" id="PTHR44154:SF1">
    <property type="entry name" value="QUINONE OXIDOREDUCTASE"/>
    <property type="match status" value="1"/>
</dbReference>
<dbReference type="Pfam" id="PF08240">
    <property type="entry name" value="ADH_N"/>
    <property type="match status" value="1"/>
</dbReference>
<dbReference type="Pfam" id="PF00107">
    <property type="entry name" value="ADH_zinc_N"/>
    <property type="match status" value="1"/>
</dbReference>
<dbReference type="SMART" id="SM00829">
    <property type="entry name" value="PKS_ER"/>
    <property type="match status" value="1"/>
</dbReference>
<dbReference type="SUPFAM" id="SSF50129">
    <property type="entry name" value="GroES-like"/>
    <property type="match status" value="1"/>
</dbReference>
<dbReference type="SUPFAM" id="SSF51735">
    <property type="entry name" value="NAD(P)-binding Rossmann-fold domains"/>
    <property type="match status" value="1"/>
</dbReference>
<dbReference type="PROSITE" id="PS01162">
    <property type="entry name" value="QOR_ZETA_CRYSTAL"/>
    <property type="match status" value="1"/>
</dbReference>
<reference key="1">
    <citation type="submission" date="2004-11" db="EMBL/GenBank/DDBJ databases">
        <authorList>
            <consortium name="The German cDNA consortium"/>
        </authorList>
    </citation>
    <scope>NUCLEOTIDE SEQUENCE [LARGE SCALE MRNA]</scope>
    <source>
        <tissue>Brain cortex</tissue>
    </source>
</reference>
<organism>
    <name type="scientific">Pongo abelii</name>
    <name type="common">Sumatran orangutan</name>
    <name type="synonym">Pongo pygmaeus abelii</name>
    <dbReference type="NCBI Taxonomy" id="9601"/>
    <lineage>
        <taxon>Eukaryota</taxon>
        <taxon>Metazoa</taxon>
        <taxon>Chordata</taxon>
        <taxon>Craniata</taxon>
        <taxon>Vertebrata</taxon>
        <taxon>Euteleostomi</taxon>
        <taxon>Mammalia</taxon>
        <taxon>Eutheria</taxon>
        <taxon>Euarchontoglires</taxon>
        <taxon>Primates</taxon>
        <taxon>Haplorrhini</taxon>
        <taxon>Catarrhini</taxon>
        <taxon>Hominidae</taxon>
        <taxon>Pongo</taxon>
    </lineage>
</organism>
<sequence length="329" mass="35083">MATGQKLMRAVRVFEFGGPEVLKLQSDIAVPIPKDHQALIKVHACGVNPVETYIRSGTYSRKPLLPYTPGSDVAGVIEAVGGNASAFKKGDRVFTSSTISGGYAEYALAADHTVYKLPEKLDFKQGAAIGIPYFTAYRALIHSAHVKAGESVLVHGASGGVGLAACQIARAYGLKVLGTAGTEEGQKIVLQNGAHEVFNHREVNYIDKIKKYVGEKGIDVIIEMLANVNLNKDLSLLSHGGQVIVVGSRGTIEINPRDTMAKESSIIGVTVFSSTKEEFQQYAAALQAGMEIGWLKPVIGSQYPLEKVAEAHENIIHGSGATGKMILLL</sequence>
<feature type="initiator methionine" description="Removed" evidence="3">
    <location>
        <position position="1"/>
    </location>
</feature>
<feature type="chain" id="PRO_0000160909" description="Quinone oxidoreductase">
    <location>
        <begin position="2"/>
        <end position="329"/>
    </location>
</feature>
<feature type="binding site" evidence="1">
    <location>
        <position position="53"/>
    </location>
    <ligand>
        <name>NADP(+)</name>
        <dbReference type="ChEBI" id="CHEBI:58349"/>
    </ligand>
</feature>
<feature type="binding site" evidence="1">
    <location>
        <begin position="158"/>
        <end position="161"/>
    </location>
    <ligand>
        <name>NADP(+)</name>
        <dbReference type="ChEBI" id="CHEBI:58349"/>
    </ligand>
</feature>
<feature type="binding site" evidence="1">
    <location>
        <position position="181"/>
    </location>
    <ligand>
        <name>NADP(+)</name>
        <dbReference type="ChEBI" id="CHEBI:58349"/>
    </ligand>
</feature>
<feature type="binding site" evidence="1">
    <location>
        <position position="200"/>
    </location>
    <ligand>
        <name>NADP(+)</name>
        <dbReference type="ChEBI" id="CHEBI:58349"/>
    </ligand>
</feature>
<feature type="binding site" evidence="1">
    <location>
        <position position="229"/>
    </location>
    <ligand>
        <name>NADP(+)</name>
        <dbReference type="ChEBI" id="CHEBI:58349"/>
    </ligand>
</feature>
<feature type="binding site" evidence="1">
    <location>
        <begin position="246"/>
        <end position="249"/>
    </location>
    <ligand>
        <name>NADP(+)</name>
        <dbReference type="ChEBI" id="CHEBI:58349"/>
    </ligand>
</feature>
<feature type="binding site" evidence="1">
    <location>
        <begin position="269"/>
        <end position="271"/>
    </location>
    <ligand>
        <name>NADP(+)</name>
        <dbReference type="ChEBI" id="CHEBI:58349"/>
    </ligand>
</feature>
<feature type="modified residue" description="N-acetylalanine" evidence="3">
    <location>
        <position position="2"/>
    </location>
</feature>
<feature type="modified residue" description="N6-acetyllysine" evidence="3">
    <location>
        <position position="23"/>
    </location>
</feature>
<feature type="modified residue" description="Phosphoserine" evidence="3">
    <location>
        <position position="248"/>
    </location>
</feature>
<feature type="modified residue" description="N6-succinyllysine" evidence="2">
    <location>
        <position position="296"/>
    </location>
</feature>
<accession>Q5R4S7</accession>
<protein>
    <recommendedName>
        <fullName>Quinone oxidoreductase</fullName>
        <ecNumber>1.6.5.5</ecNumber>
    </recommendedName>
    <alternativeName>
        <fullName>NADPH:quinone reductase</fullName>
    </alternativeName>
    <alternativeName>
        <fullName>Zeta-crystallin</fullName>
    </alternativeName>
</protein>
<gene>
    <name type="primary">CRYZ</name>
</gene>
<evidence type="ECO:0000250" key="1"/>
<evidence type="ECO:0000250" key="2">
    <source>
        <dbReference type="UniProtKB" id="P47199"/>
    </source>
</evidence>
<evidence type="ECO:0000250" key="3">
    <source>
        <dbReference type="UniProtKB" id="Q08257"/>
    </source>
</evidence>
<evidence type="ECO:0000305" key="4"/>
<keyword id="KW-0007">Acetylation</keyword>
<keyword id="KW-0963">Cytoplasm</keyword>
<keyword id="KW-0521">NADP</keyword>
<keyword id="KW-0560">Oxidoreductase</keyword>
<keyword id="KW-0597">Phosphoprotein</keyword>
<keyword id="KW-1185">Reference proteome</keyword>
<keyword id="KW-0694">RNA-binding</keyword>
<name>QOR_PONAB</name>
<comment type="function">
    <text evidence="1">Does not have alcohol dehydrogenase activity. Binds NADP and acts through a one-electron transfer process. Orthoquinones, such as 1,2-naphthoquinone or 9,10-phenanthrenequinone, are the best substrates (in vitro). May act in the detoxification of xenobiotics. Interacts with (AU)-rich elements (ARE) in the 3'-UTR of target mRNA species and enhances their stability. NADPH binding interferes with mRNA binding (By similarity).</text>
</comment>
<comment type="catalytic activity">
    <reaction>
        <text>2 a quinone + NADPH + H(+) = 2 a 1,4-benzosemiquinone + NADP(+)</text>
        <dbReference type="Rhea" id="RHEA:14269"/>
        <dbReference type="ChEBI" id="CHEBI:15378"/>
        <dbReference type="ChEBI" id="CHEBI:57783"/>
        <dbReference type="ChEBI" id="CHEBI:58349"/>
        <dbReference type="ChEBI" id="CHEBI:132124"/>
        <dbReference type="ChEBI" id="CHEBI:134225"/>
        <dbReference type="EC" id="1.6.5.5"/>
    </reaction>
</comment>
<comment type="subunit">
    <text evidence="1">Homotetramer.</text>
</comment>
<comment type="subcellular location">
    <subcellularLocation>
        <location evidence="1">Cytoplasm</location>
    </subcellularLocation>
</comment>
<comment type="similarity">
    <text evidence="4">Belongs to the zinc-containing alcohol dehydrogenase family. Quinone oxidoreductase subfamily.</text>
</comment>
<proteinExistence type="evidence at transcript level"/>